<gene>
    <name evidence="2" type="primary">N</name>
    <name type="ORF">7a</name>
</gene>
<organism>
    <name type="scientific">Bovine coronavirus (strain 98TXSF-110-LUN)</name>
    <name type="common">BCoV-LUN</name>
    <name type="synonym">BCV</name>
    <dbReference type="NCBI Taxonomy" id="233264"/>
    <lineage>
        <taxon>Viruses</taxon>
        <taxon>Riboviria</taxon>
        <taxon>Orthornavirae</taxon>
        <taxon>Pisuviricota</taxon>
        <taxon>Pisoniviricetes</taxon>
        <taxon>Nidovirales</taxon>
        <taxon>Cornidovirineae</taxon>
        <taxon>Coronaviridae</taxon>
        <taxon>Orthocoronavirinae</taxon>
        <taxon>Betacoronavirus</taxon>
        <taxon>Embecovirus</taxon>
        <taxon>Betacoronavirus 1</taxon>
    </lineage>
</organism>
<comment type="function">
    <text evidence="2">Packages the positive strand viral genome RNA into a helical ribonucleocapsid (RNP) and plays a fundamental role during virion assembly through its interactions with the viral genome and membrane protein M. Plays an important role in enhancing the efficiency of subgenomic viral RNA transcription as well as viral replication.</text>
</comment>
<comment type="subunit">
    <text evidence="2">Homooligomer. Both monomeric and oligomeric forms interact with RNA. Interacts with protein M. Interacts with NSP3; this interaction serves to tether the genome to the newly translated replicase-transcriptase complex at a very early stage of infection.</text>
</comment>
<comment type="subcellular location">
    <subcellularLocation>
        <location evidence="2">Virion</location>
    </subcellularLocation>
    <subcellularLocation>
        <location evidence="2">Host endoplasmic reticulum-Golgi intermediate compartment</location>
    </subcellularLocation>
    <subcellularLocation>
        <location evidence="2">Host Golgi apparatus</location>
    </subcellularLocation>
    <text evidence="2">Located inside the virion, complexed with the viral RNA. Probably associates with ER-derived membranes where it participates in viral RNA synthesis and virus budding.</text>
</comment>
<comment type="PTM">
    <text evidence="2">ADP-ribosylated. The ADP-ribosylation is retained in the virion during infection.</text>
</comment>
<comment type="PTM">
    <text evidence="2">Phosphorylated on serine and threonine residues.</text>
</comment>
<comment type="similarity">
    <text evidence="2">Belongs to the betacoronavirus nucleocapsid protein family.</text>
</comment>
<reference key="1">
    <citation type="journal article" date="2001" name="J. Gen. Virol.">
        <title>Comparison of genomic and predicted amino acid sequences of respiratory and enteric bovine coronaviruses isolated from the same animal with fatal shipping pneumonia.</title>
        <authorList>
            <person name="Chouljenko V.N."/>
            <person name="Lin X.Q."/>
            <person name="Storz J."/>
            <person name="Kousoulas K.G."/>
            <person name="Gorbalenya A.E."/>
        </authorList>
    </citation>
    <scope>NUCLEOTIDE SEQUENCE [GENOMIC RNA]</scope>
</reference>
<feature type="chain" id="PRO_0000105992" description="Nucleoprotein">
    <location>
        <begin position="1"/>
        <end position="448"/>
    </location>
</feature>
<feature type="domain" description="CoV N NTD" evidence="3">
    <location>
        <begin position="61"/>
        <end position="190"/>
    </location>
</feature>
<feature type="domain" description="CoV N CTD" evidence="4">
    <location>
        <begin position="259"/>
        <end position="384"/>
    </location>
</feature>
<feature type="region of interest" description="Disordered" evidence="5">
    <location>
        <begin position="1"/>
        <end position="55"/>
    </location>
</feature>
<feature type="region of interest" description="RNA-binding" evidence="2">
    <location>
        <begin position="52"/>
        <end position="194"/>
    </location>
</feature>
<feature type="region of interest" description="Disordered" evidence="5">
    <location>
        <begin position="158"/>
        <end position="231"/>
    </location>
</feature>
<feature type="region of interest" description="Dimerization" evidence="2">
    <location>
        <begin position="266"/>
        <end position="384"/>
    </location>
</feature>
<feature type="region of interest" description="Disordered" evidence="5">
    <location>
        <begin position="383"/>
        <end position="420"/>
    </location>
</feature>
<feature type="compositionally biased region" description="Low complexity" evidence="5">
    <location>
        <begin position="9"/>
        <end position="22"/>
    </location>
</feature>
<feature type="compositionally biased region" description="Polar residues" evidence="5">
    <location>
        <begin position="29"/>
        <end position="38"/>
    </location>
</feature>
<feature type="compositionally biased region" description="Polar residues" evidence="5">
    <location>
        <begin position="45"/>
        <end position="55"/>
    </location>
</feature>
<feature type="compositionally biased region" description="Low complexity" evidence="5">
    <location>
        <begin position="193"/>
        <end position="223"/>
    </location>
</feature>
<feature type="compositionally biased region" description="Polar residues" evidence="5">
    <location>
        <begin position="383"/>
        <end position="393"/>
    </location>
</feature>
<feature type="compositionally biased region" description="Polar residues" evidence="5">
    <location>
        <begin position="399"/>
        <end position="409"/>
    </location>
</feature>
<feature type="binding site" evidence="1">
    <location>
        <position position="106"/>
    </location>
    <ligand>
        <name>RNA</name>
        <dbReference type="ChEBI" id="CHEBI:33697"/>
    </ligand>
</feature>
<feature type="binding site" evidence="1">
    <location>
        <position position="122"/>
    </location>
    <ligand>
        <name>RNA</name>
        <dbReference type="ChEBI" id="CHEBI:33697"/>
    </ligand>
</feature>
<feature type="binding site" evidence="1">
    <location>
        <position position="164"/>
    </location>
    <ligand>
        <name>RNA</name>
        <dbReference type="ChEBI" id="CHEBI:33697"/>
    </ligand>
</feature>
<feature type="modified residue" description="Phosphoserine; by host" evidence="2">
    <location>
        <position position="167"/>
    </location>
</feature>
<feature type="modified residue" description="Phosphothreonine; by host" evidence="2">
    <location>
        <position position="174"/>
    </location>
</feature>
<feature type="modified residue" description="Phosphoserine; by host" evidence="2">
    <location>
        <position position="191"/>
    </location>
</feature>
<feature type="modified residue" description="Phosphoserine; by host" evidence="2">
    <location>
        <position position="390"/>
    </location>
</feature>
<feature type="modified residue" description="Phosphothreonine; by host" evidence="2">
    <location>
        <position position="427"/>
    </location>
</feature>
<proteinExistence type="inferred from homology"/>
<evidence type="ECO:0000250" key="1">
    <source>
        <dbReference type="UniProtKB" id="P0DTC9"/>
    </source>
</evidence>
<evidence type="ECO:0000255" key="2">
    <source>
        <dbReference type="HAMAP-Rule" id="MF_04096"/>
    </source>
</evidence>
<evidence type="ECO:0000255" key="3">
    <source>
        <dbReference type="PROSITE-ProRule" id="PRU01276"/>
    </source>
</evidence>
<evidence type="ECO:0000255" key="4">
    <source>
        <dbReference type="PROSITE-ProRule" id="PRU01277"/>
    </source>
</evidence>
<evidence type="ECO:0000256" key="5">
    <source>
        <dbReference type="SAM" id="MobiDB-lite"/>
    </source>
</evidence>
<accession>Q8V432</accession>
<keyword id="KW-0013">ADP-ribosylation</keyword>
<keyword id="KW-1040">Host Golgi apparatus</keyword>
<keyword id="KW-0597">Phosphoprotein</keyword>
<keyword id="KW-0687">Ribonucleoprotein</keyword>
<keyword id="KW-0694">RNA-binding</keyword>
<keyword id="KW-0804">Transcription</keyword>
<keyword id="KW-0805">Transcription regulation</keyword>
<keyword id="KW-0543">Viral nucleoprotein</keyword>
<keyword id="KW-0946">Virion</keyword>
<name>NCAP_CVBLU</name>
<protein>
    <recommendedName>
        <fullName evidence="2">Nucleoprotein</fullName>
    </recommendedName>
    <alternativeName>
        <fullName evidence="2">Nucleocapsid protein</fullName>
        <shortName evidence="2">NC</shortName>
        <shortName evidence="2">Protein N</shortName>
    </alternativeName>
</protein>
<organismHost>
    <name type="scientific">Bos taurus</name>
    <name type="common">Bovine</name>
    <dbReference type="NCBI Taxonomy" id="9913"/>
</organismHost>
<sequence length="448" mass="49285">MSFTPGKQSSSRASSGNRSGNGILKWADQSDQSRNVQTRGRRAQSKQTATSQQPSGGNVVPYYSWFSGITQFQKGKEFEFAEGQGVPIAPGVPATEAKGYWYRHNRRSFKTADGNQRQLLPRWYFYYLGTGPHAKDQYGTDIDGVYWVASNQADVNTPADILDRDPSSDEAIPTRFPPGTVLPQGYYIEGSGRSAPNSRSTSRASSRASSAGSRSRANSGNRTPTSGVTPDMADQIASLVLAKLGKDAAKPQQVTKQTAKEIRQKILNKPRQKRSPNKQCTVQQCFGKRGPNQNFGGGEMLKLGTSDPQFPILAELAPTAGAFFFGSRLELAKVQNLSGNLDEPQKDVYELRYNGAIRFDSTLSGFETIMKVLNENLNAYQQQDGTMNMSPKPQRQRGQKNGQGENDNISVAAPKSRVQQNKIRELTAEDISLLKKMDEPFTEDTSEI</sequence>
<dbReference type="EMBL" id="AF391542">
    <property type="protein sequence ID" value="AAL57313.1"/>
    <property type="molecule type" value="Genomic_RNA"/>
</dbReference>
<dbReference type="SMR" id="Q8V432"/>
<dbReference type="Proteomes" id="UP000008571">
    <property type="component" value="Genome"/>
</dbReference>
<dbReference type="GO" id="GO:0044172">
    <property type="term" value="C:host cell endoplasmic reticulum-Golgi intermediate compartment"/>
    <property type="evidence" value="ECO:0007669"/>
    <property type="project" value="UniProtKB-SubCell"/>
</dbReference>
<dbReference type="GO" id="GO:0044177">
    <property type="term" value="C:host cell Golgi apparatus"/>
    <property type="evidence" value="ECO:0007669"/>
    <property type="project" value="UniProtKB-SubCell"/>
</dbReference>
<dbReference type="GO" id="GO:1990904">
    <property type="term" value="C:ribonucleoprotein complex"/>
    <property type="evidence" value="ECO:0007669"/>
    <property type="project" value="UniProtKB-KW"/>
</dbReference>
<dbReference type="GO" id="GO:0019013">
    <property type="term" value="C:viral nucleocapsid"/>
    <property type="evidence" value="ECO:0007669"/>
    <property type="project" value="UniProtKB-UniRule"/>
</dbReference>
<dbReference type="GO" id="GO:0003723">
    <property type="term" value="F:RNA binding"/>
    <property type="evidence" value="ECO:0007669"/>
    <property type="project" value="UniProtKB-UniRule"/>
</dbReference>
<dbReference type="CDD" id="cd21595">
    <property type="entry name" value="CoV_N-CTD"/>
    <property type="match status" value="1"/>
</dbReference>
<dbReference type="CDD" id="cd21554">
    <property type="entry name" value="CoV_N-NTD"/>
    <property type="match status" value="1"/>
</dbReference>
<dbReference type="HAMAP" id="MF_04096">
    <property type="entry name" value="BETA_CORONA_NCAP"/>
    <property type="match status" value="1"/>
</dbReference>
<dbReference type="InterPro" id="IPR044344">
    <property type="entry name" value="N_prot_C_CoV"/>
</dbReference>
<dbReference type="InterPro" id="IPR044345">
    <property type="entry name" value="N_prot_N_CoV"/>
</dbReference>
<dbReference type="InterPro" id="IPR043505">
    <property type="entry name" value="NCAP_bCoV"/>
</dbReference>
<dbReference type="InterPro" id="IPR001218">
    <property type="entry name" value="Nucleocap_CoV"/>
</dbReference>
<dbReference type="InterPro" id="IPR037179">
    <property type="entry name" value="Nucleocapsid_C"/>
</dbReference>
<dbReference type="InterPro" id="IPR037195">
    <property type="entry name" value="Nucleocapsid_N"/>
</dbReference>
<dbReference type="Pfam" id="PF00937">
    <property type="entry name" value="CoV_nucleocap"/>
    <property type="match status" value="1"/>
</dbReference>
<dbReference type="PIRSF" id="PIRSF003888">
    <property type="entry name" value="Corona_nucleocap"/>
    <property type="match status" value="1"/>
</dbReference>
<dbReference type="SUPFAM" id="SSF110304">
    <property type="entry name" value="Coronavirus RNA-binding domain"/>
    <property type="match status" value="1"/>
</dbReference>
<dbReference type="SUPFAM" id="SSF103068">
    <property type="entry name" value="Nucleocapsid protein dimerization domain"/>
    <property type="match status" value="1"/>
</dbReference>
<dbReference type="PROSITE" id="PS51929">
    <property type="entry name" value="COV_N_CTD"/>
    <property type="match status" value="1"/>
</dbReference>
<dbReference type="PROSITE" id="PS51928">
    <property type="entry name" value="COV_N_NTD"/>
    <property type="match status" value="1"/>
</dbReference>